<reference key="1">
    <citation type="submission" date="2006-08" db="EMBL/GenBank/DDBJ databases">
        <authorList>
            <consortium name="NIH - Mammalian Gene Collection (MGC) project"/>
        </authorList>
    </citation>
    <scope>NUCLEOTIDE SEQUENCE [LARGE SCALE MRNA]</scope>
    <source>
        <strain>Hereford</strain>
        <tissue>Fetal pons</tissue>
    </source>
</reference>
<protein>
    <recommendedName>
        <fullName>Poly(rC)-binding protein 4</fullName>
    </recommendedName>
    <alternativeName>
        <fullName>Alpha-CP4</fullName>
    </alternativeName>
</protein>
<gene>
    <name type="primary">PCBP4</name>
</gene>
<dbReference type="EMBL" id="BC120009">
    <property type="protein sequence ID" value="AAI20010.1"/>
    <property type="molecule type" value="mRNA"/>
</dbReference>
<dbReference type="RefSeq" id="NP_001068751.1">
    <property type="nucleotide sequence ID" value="NM_001075283.2"/>
</dbReference>
<dbReference type="RefSeq" id="XP_010815992.1">
    <property type="nucleotide sequence ID" value="XM_010817690.4"/>
</dbReference>
<dbReference type="SMR" id="Q0VCU0"/>
<dbReference type="FunCoup" id="Q0VCU0">
    <property type="interactions" value="1450"/>
</dbReference>
<dbReference type="STRING" id="9913.ENSBTAP00000024779"/>
<dbReference type="PaxDb" id="9913-ENSBTAP00000024779"/>
<dbReference type="GeneID" id="506889"/>
<dbReference type="KEGG" id="bta:506889"/>
<dbReference type="CTD" id="57060"/>
<dbReference type="VEuPathDB" id="HostDB:ENSBTAG00000018622"/>
<dbReference type="eggNOG" id="KOG2190">
    <property type="taxonomic scope" value="Eukaryota"/>
</dbReference>
<dbReference type="HOGENOM" id="CLU_022670_0_0_1"/>
<dbReference type="InParanoid" id="Q0VCU0"/>
<dbReference type="OMA" id="TISTRKM"/>
<dbReference type="OrthoDB" id="442947at2759"/>
<dbReference type="TreeFam" id="TF318292"/>
<dbReference type="Proteomes" id="UP000009136">
    <property type="component" value="Chromosome 22"/>
</dbReference>
<dbReference type="Bgee" id="ENSBTAG00000018622">
    <property type="expression patterns" value="Expressed in retina and 106 other cell types or tissues"/>
</dbReference>
<dbReference type="GO" id="GO:0005737">
    <property type="term" value="C:cytoplasm"/>
    <property type="evidence" value="ECO:0000318"/>
    <property type="project" value="GO_Central"/>
</dbReference>
<dbReference type="GO" id="GO:0005634">
    <property type="term" value="C:nucleus"/>
    <property type="evidence" value="ECO:0000318"/>
    <property type="project" value="GO_Central"/>
</dbReference>
<dbReference type="GO" id="GO:1990904">
    <property type="term" value="C:ribonucleoprotein complex"/>
    <property type="evidence" value="ECO:0007669"/>
    <property type="project" value="UniProtKB-KW"/>
</dbReference>
<dbReference type="GO" id="GO:0003677">
    <property type="term" value="F:DNA binding"/>
    <property type="evidence" value="ECO:0007669"/>
    <property type="project" value="UniProtKB-KW"/>
</dbReference>
<dbReference type="GO" id="GO:0003729">
    <property type="term" value="F:mRNA binding"/>
    <property type="evidence" value="ECO:0000318"/>
    <property type="project" value="GO_Central"/>
</dbReference>
<dbReference type="GO" id="GO:0048025">
    <property type="term" value="P:negative regulation of mRNA splicing, via spliceosome"/>
    <property type="evidence" value="ECO:0000318"/>
    <property type="project" value="GO_Central"/>
</dbReference>
<dbReference type="GO" id="GO:0006357">
    <property type="term" value="P:regulation of transcription by RNA polymerase II"/>
    <property type="evidence" value="ECO:0000318"/>
    <property type="project" value="GO_Central"/>
</dbReference>
<dbReference type="CDD" id="cd22517">
    <property type="entry name" value="KH-I_PCBP4_rpt1"/>
    <property type="match status" value="1"/>
</dbReference>
<dbReference type="CDD" id="cd22520">
    <property type="entry name" value="KH-I_PCBP4_rpt2"/>
    <property type="match status" value="1"/>
</dbReference>
<dbReference type="CDD" id="cd22523">
    <property type="entry name" value="KH-I_PCBP4_rpt3"/>
    <property type="match status" value="1"/>
</dbReference>
<dbReference type="FunFam" id="3.30.1370.10:FF:000002">
    <property type="entry name" value="poly(RC)-binding protein 2 isoform X1"/>
    <property type="match status" value="1"/>
</dbReference>
<dbReference type="FunFam" id="3.30.1370.10:FF:000005">
    <property type="entry name" value="poly(RC)-binding protein 2 isoform X1"/>
    <property type="match status" value="1"/>
</dbReference>
<dbReference type="FunFam" id="3.30.1370.10:FF:000058">
    <property type="entry name" value="poly(RC)-binding protein 4 isoform X1"/>
    <property type="match status" value="1"/>
</dbReference>
<dbReference type="Gene3D" id="3.30.1370.10">
    <property type="entry name" value="K Homology domain, type 1"/>
    <property type="match status" value="3"/>
</dbReference>
<dbReference type="InterPro" id="IPR004087">
    <property type="entry name" value="KH_dom"/>
</dbReference>
<dbReference type="InterPro" id="IPR004088">
    <property type="entry name" value="KH_dom_type_1"/>
</dbReference>
<dbReference type="InterPro" id="IPR036612">
    <property type="entry name" value="KH_dom_type_1_sf"/>
</dbReference>
<dbReference type="PANTHER" id="PTHR10288">
    <property type="entry name" value="KH DOMAIN CONTAINING RNA BINDING PROTEIN"/>
    <property type="match status" value="1"/>
</dbReference>
<dbReference type="Pfam" id="PF00013">
    <property type="entry name" value="KH_1"/>
    <property type="match status" value="3"/>
</dbReference>
<dbReference type="SMART" id="SM00322">
    <property type="entry name" value="KH"/>
    <property type="match status" value="3"/>
</dbReference>
<dbReference type="SUPFAM" id="SSF54791">
    <property type="entry name" value="Eukaryotic type KH-domain (KH-domain type I)"/>
    <property type="match status" value="3"/>
</dbReference>
<dbReference type="PROSITE" id="PS50084">
    <property type="entry name" value="KH_TYPE_1"/>
    <property type="match status" value="3"/>
</dbReference>
<sequence>MSGSDAGLEEEPELSITLTLRMLMHGKEVGSIIGKKGETVKRIREQSSARITISEGSCPERITTITGSTAAVFHAVSMIAFKLDEDLCAAPANGGNVSRPPVTLRLVIPASQCGSLIGKAGTKIKEIRETTGAQVQVAGDLLPNSTERAVTVSGVPDAIILCVRQICAVILESPPKGATIPYHPSLSLGTVLLSTNQGFSVQGQYGTVTPAEVTKLQQLSGHAVPFASPSMVPGLDPSTQTSSQEFLVPNDLIGCVIGRQGSKISEIRQMSGAHIKIGNQAEGAGERHVTITGSPVSIALAQYLITACLETAKSTSGGTPGSAPTDLPAPFSPPLTALPTAPPGLLGTPYAISLSNFIGLKPVPFLALPPASPGPPPGLAAYTAKMAAANGSKKAERQKFSPY</sequence>
<keyword id="KW-0963">Cytoplasm</keyword>
<keyword id="KW-0238">DNA-binding</keyword>
<keyword id="KW-1185">Reference proteome</keyword>
<keyword id="KW-0677">Repeat</keyword>
<keyword id="KW-0687">Ribonucleoprotein</keyword>
<keyword id="KW-0694">RNA-binding</keyword>
<evidence type="ECO:0000250" key="1"/>
<evidence type="ECO:0000255" key="2">
    <source>
        <dbReference type="PROSITE-ProRule" id="PRU00117"/>
    </source>
</evidence>
<accession>Q0VCU0</accession>
<organism>
    <name type="scientific">Bos taurus</name>
    <name type="common">Bovine</name>
    <dbReference type="NCBI Taxonomy" id="9913"/>
    <lineage>
        <taxon>Eukaryota</taxon>
        <taxon>Metazoa</taxon>
        <taxon>Chordata</taxon>
        <taxon>Craniata</taxon>
        <taxon>Vertebrata</taxon>
        <taxon>Euteleostomi</taxon>
        <taxon>Mammalia</taxon>
        <taxon>Eutheria</taxon>
        <taxon>Laurasiatheria</taxon>
        <taxon>Artiodactyla</taxon>
        <taxon>Ruminantia</taxon>
        <taxon>Pecora</taxon>
        <taxon>Bovidae</taxon>
        <taxon>Bovinae</taxon>
        <taxon>Bos</taxon>
    </lineage>
</organism>
<name>PCBP4_BOVIN</name>
<comment type="function">
    <text evidence="1">Single-stranded nucleic acid binding protein that binds preferentially to oligo dC.</text>
</comment>
<comment type="subcellular location">
    <subcellularLocation>
        <location evidence="1">Cytoplasm</location>
    </subcellularLocation>
</comment>
<proteinExistence type="evidence at transcript level"/>
<feature type="chain" id="PRO_0000263084" description="Poly(rC)-binding protein 4">
    <location>
        <begin position="1"/>
        <end position="403"/>
    </location>
</feature>
<feature type="domain" description="KH 1" evidence="2">
    <location>
        <begin position="17"/>
        <end position="67"/>
    </location>
</feature>
<feature type="domain" description="KH 2" evidence="2">
    <location>
        <begin position="101"/>
        <end position="154"/>
    </location>
</feature>
<feature type="domain" description="KH 3" evidence="2">
    <location>
        <begin position="241"/>
        <end position="293"/>
    </location>
</feature>